<evidence type="ECO:0000305" key="1"/>
<proteinExistence type="inferred from homology"/>
<comment type="function">
    <text>Metallothioneins have a high content of cysteine residues that bind various heavy metals.</text>
</comment>
<comment type="similarity">
    <text evidence="1">Belongs to the metallothionein superfamily. Type 15 family.</text>
</comment>
<reference key="1">
    <citation type="submission" date="1996-06" db="EMBL/GenBank/DDBJ databases">
        <authorList>
            <person name="Dong J.Z."/>
            <person name="Dunstan D.I."/>
        </authorList>
    </citation>
    <scope>NUCLEOTIDE SEQUENCE [MRNA]</scope>
</reference>
<organism>
    <name type="scientific">Picea glauca</name>
    <name type="common">White spruce</name>
    <name type="synonym">Pinus glauca</name>
    <dbReference type="NCBI Taxonomy" id="3330"/>
    <lineage>
        <taxon>Eukaryota</taxon>
        <taxon>Viridiplantae</taxon>
        <taxon>Streptophyta</taxon>
        <taxon>Embryophyta</taxon>
        <taxon>Tracheophyta</taxon>
        <taxon>Spermatophyta</taxon>
        <taxon>Pinopsida</taxon>
        <taxon>Pinidae</taxon>
        <taxon>Conifers I</taxon>
        <taxon>Pinales</taxon>
        <taxon>Pinaceae</taxon>
        <taxon>Picea</taxon>
    </lineage>
</organism>
<protein>
    <recommendedName>
        <fullName>Metallothionein-like protein EMB30</fullName>
    </recommendedName>
</protein>
<dbReference type="EMBL" id="L47746">
    <property type="protein sequence ID" value="AAB01564.1"/>
    <property type="molecule type" value="mRNA"/>
</dbReference>
<dbReference type="PIR" id="T09258">
    <property type="entry name" value="T09258"/>
</dbReference>
<dbReference type="GO" id="GO:0046872">
    <property type="term" value="F:metal ion binding"/>
    <property type="evidence" value="ECO:0007669"/>
    <property type="project" value="UniProtKB-KW"/>
</dbReference>
<dbReference type="GO" id="GO:1990748">
    <property type="term" value="P:cellular detoxification"/>
    <property type="evidence" value="ECO:0000250"/>
    <property type="project" value="UniProtKB"/>
</dbReference>
<accession>Q40854</accession>
<gene>
    <name type="primary">EMB30</name>
</gene>
<keyword id="KW-0479">Metal-binding</keyword>
<keyword id="KW-0480">Metal-thiolate cluster</keyword>
<name>MT3_PICGL</name>
<sequence length="60" mass="6317">MSSDCGNCDCADKSQCTKKGFQIDGIVETSYEMGHGGDVSLENDCKCGPNCQCGTCTCHT</sequence>
<feature type="chain" id="PRO_0000197417" description="Metallothionein-like protein EMB30">
    <location>
        <begin position="1"/>
        <end position="60"/>
    </location>
</feature>